<protein>
    <recommendedName>
        <fullName evidence="1">Large ribosomal subunit protein eL15</fullName>
    </recommendedName>
    <alternativeName>
        <fullName evidence="3">50S ribosomal protein L15e</fullName>
    </alternativeName>
</protein>
<feature type="chain" id="PRO_1000125599" description="Large ribosomal subunit protein eL15">
    <location>
        <begin position="1"/>
        <end position="196"/>
    </location>
</feature>
<feature type="region of interest" description="Disordered" evidence="2">
    <location>
        <begin position="69"/>
        <end position="100"/>
    </location>
</feature>
<feature type="region of interest" description="Disordered" evidence="2">
    <location>
        <begin position="161"/>
        <end position="196"/>
    </location>
</feature>
<feature type="compositionally biased region" description="Basic residues" evidence="2">
    <location>
        <begin position="69"/>
        <end position="98"/>
    </location>
</feature>
<feature type="compositionally biased region" description="Polar residues" evidence="2">
    <location>
        <begin position="186"/>
        <end position="196"/>
    </location>
</feature>
<accession>B9LSV1</accession>
<evidence type="ECO:0000255" key="1">
    <source>
        <dbReference type="HAMAP-Rule" id="MF_00256"/>
    </source>
</evidence>
<evidence type="ECO:0000256" key="2">
    <source>
        <dbReference type="SAM" id="MobiDB-lite"/>
    </source>
</evidence>
<evidence type="ECO:0000305" key="3"/>
<dbReference type="EMBL" id="CP001365">
    <property type="protein sequence ID" value="ACM56016.1"/>
    <property type="molecule type" value="Genomic_DNA"/>
</dbReference>
<dbReference type="RefSeq" id="WP_012659654.1">
    <property type="nucleotide sequence ID" value="NC_012029.1"/>
</dbReference>
<dbReference type="SMR" id="B9LSV1"/>
<dbReference type="GeneID" id="7401030"/>
<dbReference type="KEGG" id="hla:Hlac_0413"/>
<dbReference type="eggNOG" id="arCOG04209">
    <property type="taxonomic scope" value="Archaea"/>
</dbReference>
<dbReference type="HOGENOM" id="CLU_080796_1_0_2"/>
<dbReference type="Proteomes" id="UP000000740">
    <property type="component" value="Chromosome 1"/>
</dbReference>
<dbReference type="GO" id="GO:0022625">
    <property type="term" value="C:cytosolic large ribosomal subunit"/>
    <property type="evidence" value="ECO:0007669"/>
    <property type="project" value="TreeGrafter"/>
</dbReference>
<dbReference type="GO" id="GO:0003723">
    <property type="term" value="F:RNA binding"/>
    <property type="evidence" value="ECO:0007669"/>
    <property type="project" value="TreeGrafter"/>
</dbReference>
<dbReference type="GO" id="GO:0003735">
    <property type="term" value="F:structural constituent of ribosome"/>
    <property type="evidence" value="ECO:0007669"/>
    <property type="project" value="InterPro"/>
</dbReference>
<dbReference type="GO" id="GO:0002181">
    <property type="term" value="P:cytoplasmic translation"/>
    <property type="evidence" value="ECO:0007669"/>
    <property type="project" value="TreeGrafter"/>
</dbReference>
<dbReference type="FunFam" id="3.40.1120.10:FF:000002">
    <property type="entry name" value="50S ribosomal protein L15e"/>
    <property type="match status" value="1"/>
</dbReference>
<dbReference type="Gene3D" id="3.40.1120.10">
    <property type="entry name" value="Ribosomal protein l15e"/>
    <property type="match status" value="1"/>
</dbReference>
<dbReference type="HAMAP" id="MF_00256">
    <property type="entry name" value="Ribosomal_eL15"/>
    <property type="match status" value="1"/>
</dbReference>
<dbReference type="InterPro" id="IPR024794">
    <property type="entry name" value="Rbsml_eL15_core_dom_sf"/>
</dbReference>
<dbReference type="InterPro" id="IPR000439">
    <property type="entry name" value="Ribosomal_eL15"/>
</dbReference>
<dbReference type="InterPro" id="IPR020926">
    <property type="entry name" value="Ribosomal_eL15_arc"/>
</dbReference>
<dbReference type="InterPro" id="IPR020925">
    <property type="entry name" value="Ribosomal_eL15_CS"/>
</dbReference>
<dbReference type="InterPro" id="IPR012678">
    <property type="entry name" value="Ribosomal_uL23/eL15/eS24_sf"/>
</dbReference>
<dbReference type="NCBIfam" id="NF003269">
    <property type="entry name" value="PRK04243.1"/>
    <property type="match status" value="1"/>
</dbReference>
<dbReference type="PANTHER" id="PTHR11847:SF4">
    <property type="entry name" value="LARGE RIBOSOMAL SUBUNIT PROTEIN EL15"/>
    <property type="match status" value="1"/>
</dbReference>
<dbReference type="PANTHER" id="PTHR11847">
    <property type="entry name" value="RIBOSOMAL PROTEIN L15"/>
    <property type="match status" value="1"/>
</dbReference>
<dbReference type="Pfam" id="PF00827">
    <property type="entry name" value="Ribosomal_L15e"/>
    <property type="match status" value="1"/>
</dbReference>
<dbReference type="SMART" id="SM01384">
    <property type="entry name" value="Ribosomal_L15e"/>
    <property type="match status" value="1"/>
</dbReference>
<dbReference type="SUPFAM" id="SSF54189">
    <property type="entry name" value="Ribosomal proteins S24e, L23 and L15e"/>
    <property type="match status" value="1"/>
</dbReference>
<dbReference type="PROSITE" id="PS01194">
    <property type="entry name" value="RIBOSOMAL_L15E"/>
    <property type="match status" value="1"/>
</dbReference>
<reference key="1">
    <citation type="journal article" date="2016" name="Stand. Genomic Sci.">
        <title>Complete genome sequence of the Antarctic Halorubrum lacusprofundi type strain ACAM 34.</title>
        <authorList>
            <person name="Anderson I.J."/>
            <person name="DasSarma P."/>
            <person name="Lucas S."/>
            <person name="Copeland A."/>
            <person name="Lapidus A."/>
            <person name="Del Rio T.G."/>
            <person name="Tice H."/>
            <person name="Dalin E."/>
            <person name="Bruce D.C."/>
            <person name="Goodwin L."/>
            <person name="Pitluck S."/>
            <person name="Sims D."/>
            <person name="Brettin T.S."/>
            <person name="Detter J.C."/>
            <person name="Han C.S."/>
            <person name="Larimer F."/>
            <person name="Hauser L."/>
            <person name="Land M."/>
            <person name="Ivanova N."/>
            <person name="Richardson P."/>
            <person name="Cavicchioli R."/>
            <person name="DasSarma S."/>
            <person name="Woese C.R."/>
            <person name="Kyrpides N.C."/>
        </authorList>
    </citation>
    <scope>NUCLEOTIDE SEQUENCE [LARGE SCALE GENOMIC DNA]</scope>
    <source>
        <strain>ATCC 49239 / DSM 5036 / JCM 8891 / ACAM 34</strain>
    </source>
</reference>
<proteinExistence type="inferred from homology"/>
<comment type="similarity">
    <text evidence="1">Belongs to the eukaryotic ribosomal protein eL15 family.</text>
</comment>
<sequence length="196" mass="22551">MARSFYSHIKEAWRSPKEGKLAELQWQRKQEWRDEGAIERIERPTRLDKARELGYKAKQGVVVARVSVRKGGSRKQRHKAGRRSKRQGVNRLSRRKSIQRISEERASRKYRNLRVLNSYWVGEDGSQKWHEVILVDPNHPAIENDGDLGWIASDDHKGRAFRGLTSAGTKGRGQRTRGTGTEKTRPSVTGNDRQGK</sequence>
<name>RL15E_HALLT</name>
<keyword id="KW-1185">Reference proteome</keyword>
<keyword id="KW-0687">Ribonucleoprotein</keyword>
<keyword id="KW-0689">Ribosomal protein</keyword>
<gene>
    <name evidence="1" type="primary">rpl15e</name>
    <name type="ordered locus">Hlac_0413</name>
</gene>
<organism>
    <name type="scientific">Halorubrum lacusprofundi (strain ATCC 49239 / DSM 5036 / JCM 8891 / ACAM 34)</name>
    <dbReference type="NCBI Taxonomy" id="416348"/>
    <lineage>
        <taxon>Archaea</taxon>
        <taxon>Methanobacteriati</taxon>
        <taxon>Methanobacteriota</taxon>
        <taxon>Stenosarchaea group</taxon>
        <taxon>Halobacteria</taxon>
        <taxon>Halobacteriales</taxon>
        <taxon>Haloferacaceae</taxon>
        <taxon>Halorubrum</taxon>
    </lineage>
</organism>